<reference key="1">
    <citation type="journal article" date="2006" name="Biochemistry">
        <title>A novel conotoxin inhibitor of Kv1.6 channel and nAChR subtypes defines a new superfamily of conotoxins.</title>
        <authorList>
            <person name="Imperial J.S."/>
            <person name="Bansal P.S."/>
            <person name="Alewood P.F."/>
            <person name="Daly N.L."/>
            <person name="Craik D.J."/>
            <person name="Sporning A."/>
            <person name="Terlau H."/>
            <person name="Lopez-Vera E."/>
            <person name="Bandyopadhyay P.K."/>
            <person name="Olivera B.M."/>
        </authorList>
    </citation>
    <scope>NUCLEOTIDE SEQUENCE [MRNA]</scope>
    <source>
        <tissue>Venom duct</tissue>
    </source>
</reference>
<name>CJE3_CONPO</name>
<organism>
    <name type="scientific">Conus planorbis</name>
    <name type="common">Planorbis cone</name>
    <dbReference type="NCBI Taxonomy" id="97183"/>
    <lineage>
        <taxon>Eukaryota</taxon>
        <taxon>Metazoa</taxon>
        <taxon>Spiralia</taxon>
        <taxon>Lophotrochozoa</taxon>
        <taxon>Mollusca</taxon>
        <taxon>Gastropoda</taxon>
        <taxon>Caenogastropoda</taxon>
        <taxon>Neogastropoda</taxon>
        <taxon>Conoidea</taxon>
        <taxon>Conidae</taxon>
        <taxon>Conus</taxon>
        <taxon>Strategoconus</taxon>
    </lineage>
</organism>
<keyword id="KW-0008">Acetylcholine receptor inhibiting toxin</keyword>
<keyword id="KW-0027">Amidation</keyword>
<keyword id="KW-1015">Disulfide bond</keyword>
<keyword id="KW-0872">Ion channel impairing toxin</keyword>
<keyword id="KW-0528">Neurotoxin</keyword>
<keyword id="KW-0629">Postsynaptic neurotoxin</keyword>
<keyword id="KW-0632">Potassium channel impairing toxin</keyword>
<keyword id="KW-0964">Secreted</keyword>
<keyword id="KW-0732">Signal</keyword>
<keyword id="KW-0800">Toxin</keyword>
<keyword id="KW-1220">Voltage-gated potassium channel impairing toxin</keyword>
<proteinExistence type="inferred from homology"/>
<feature type="signal peptide" evidence="3">
    <location>
        <begin position="1"/>
        <end position="27"/>
    </location>
</feature>
<feature type="propeptide" id="PRO_0000260015" evidence="1">
    <location>
        <begin position="28"/>
        <end position="39"/>
    </location>
</feature>
<feature type="peptide" id="PRO_0000260016" description="Alpha/kappa-conotoxin-like pl14.3" evidence="6">
    <location>
        <begin position="40"/>
        <end position="64"/>
    </location>
</feature>
<feature type="propeptide" id="PRO_0000260017" evidence="1">
    <location>
        <begin position="65"/>
        <end position="76"/>
    </location>
</feature>
<feature type="modified residue" description="Aspartic acid 1-amide" evidence="2">
    <location>
        <position position="64"/>
    </location>
</feature>
<feature type="disulfide bond" evidence="2">
    <location>
        <begin position="46"/>
        <end position="61"/>
    </location>
</feature>
<feature type="disulfide bond" evidence="2">
    <location>
        <begin position="50"/>
        <end position="63"/>
    </location>
</feature>
<accession>Q0N4U5</accession>
<evidence type="ECO:0000250" key="1"/>
<evidence type="ECO:0000250" key="2">
    <source>
        <dbReference type="UniProtKB" id="Q0N4U8"/>
    </source>
</evidence>
<evidence type="ECO:0000255" key="3"/>
<evidence type="ECO:0000303" key="4">
    <source>
    </source>
</evidence>
<evidence type="ECO:0000305" key="5"/>
<evidence type="ECO:0000305" key="6">
    <source>
    </source>
</evidence>
<dbReference type="EMBL" id="DQ447643">
    <property type="protein sequence ID" value="ABE27009.1"/>
    <property type="molecule type" value="mRNA"/>
</dbReference>
<dbReference type="SMR" id="Q0N4U5"/>
<dbReference type="ConoServer" id="1185">
    <property type="toxin name" value="Pl14.3 precursor"/>
</dbReference>
<dbReference type="GO" id="GO:0005576">
    <property type="term" value="C:extracellular region"/>
    <property type="evidence" value="ECO:0007669"/>
    <property type="project" value="UniProtKB-SubCell"/>
</dbReference>
<dbReference type="GO" id="GO:0035792">
    <property type="term" value="C:host cell postsynaptic membrane"/>
    <property type="evidence" value="ECO:0007669"/>
    <property type="project" value="UniProtKB-KW"/>
</dbReference>
<dbReference type="GO" id="GO:0030550">
    <property type="term" value="F:acetylcholine receptor inhibitor activity"/>
    <property type="evidence" value="ECO:0007669"/>
    <property type="project" value="UniProtKB-KW"/>
</dbReference>
<dbReference type="GO" id="GO:0015459">
    <property type="term" value="F:potassium channel regulator activity"/>
    <property type="evidence" value="ECO:0007669"/>
    <property type="project" value="UniProtKB-KW"/>
</dbReference>
<dbReference type="GO" id="GO:0090729">
    <property type="term" value="F:toxin activity"/>
    <property type="evidence" value="ECO:0007669"/>
    <property type="project" value="UniProtKB-KW"/>
</dbReference>
<sequence>MPSVRSVACCCLLWMMLSVQLVTPGSPATAQLSGQRTARGPGSAICNMACRLEHGHLYPFCNCDGKRDVVSSSMAV</sequence>
<protein>
    <recommendedName>
        <fullName evidence="4 5">Alpha/kappa-conotoxin-like pl14.3</fullName>
    </recommendedName>
</protein>
<comment type="function">
    <text evidence="2">Highly inhibits both nicotinic acetylcholine receptors (neuronal (alpha-3/beta-4) and muscular (alpha-1/beta-1/epsilon/delta) subtypes) and the voltage-gated potassium channel Kv1.6/KCNA6 subtype.</text>
</comment>
<comment type="subcellular location">
    <subcellularLocation>
        <location evidence="6">Secreted</location>
    </subcellularLocation>
</comment>
<comment type="tissue specificity">
    <text evidence="6">Expressed by the venom duct.</text>
</comment>
<comment type="domain">
    <text evidence="5">The cysteine framework is XIV (C-C-C-C).</text>
</comment>
<comment type="similarity">
    <text evidence="5">Belongs to the conotoxin J superfamily.</text>
</comment>